<organism>
    <name type="scientific">Rattus norvegicus</name>
    <name type="common">Rat</name>
    <dbReference type="NCBI Taxonomy" id="10116"/>
    <lineage>
        <taxon>Eukaryota</taxon>
        <taxon>Metazoa</taxon>
        <taxon>Chordata</taxon>
        <taxon>Craniata</taxon>
        <taxon>Vertebrata</taxon>
        <taxon>Euteleostomi</taxon>
        <taxon>Mammalia</taxon>
        <taxon>Eutheria</taxon>
        <taxon>Euarchontoglires</taxon>
        <taxon>Glires</taxon>
        <taxon>Rodentia</taxon>
        <taxon>Myomorpha</taxon>
        <taxon>Muroidea</taxon>
        <taxon>Muridae</taxon>
        <taxon>Murinae</taxon>
        <taxon>Rattus</taxon>
    </lineage>
</organism>
<accession>P51792</accession>
<accession>Q9R287</accession>
<name>CLCN3_RAT</name>
<feature type="chain" id="PRO_0000094442" description="H(+)/Cl(-) exchange transporter 3">
    <location>
        <begin position="1"/>
        <end position="818"/>
    </location>
</feature>
<feature type="topological domain" description="Cytoplasmic" evidence="2">
    <location>
        <begin position="1"/>
        <end position="125"/>
    </location>
</feature>
<feature type="transmembrane region" description="Helical" evidence="2">
    <location>
        <begin position="126"/>
        <end position="163"/>
    </location>
</feature>
<feature type="transmembrane region" description="Helical" evidence="2">
    <location>
        <begin position="209"/>
        <end position="232"/>
    </location>
</feature>
<feature type="intramembrane region" description="Helical" evidence="2">
    <location>
        <begin position="241"/>
        <end position="248"/>
    </location>
</feature>
<feature type="transmembrane region" description="Helical" evidence="2">
    <location>
        <begin position="258"/>
        <end position="276"/>
    </location>
</feature>
<feature type="transmembrane region" description="Helical" evidence="2">
    <location>
        <begin position="282"/>
        <end position="301"/>
    </location>
</feature>
<feature type="intramembrane region" description="Helical" evidence="2">
    <location>
        <begin position="313"/>
        <end position="325"/>
    </location>
</feature>
<feature type="intramembrane region" description="Helical" evidence="2">
    <location>
        <begin position="329"/>
        <end position="337"/>
    </location>
</feature>
<feature type="transmembrane region" description="Helical" evidence="2">
    <location>
        <begin position="349"/>
        <end position="367"/>
    </location>
</feature>
<feature type="transmembrane region" description="Helical" evidence="2">
    <location>
        <begin position="391"/>
        <end position="416"/>
    </location>
</feature>
<feature type="transmembrane region" description="Helical" evidence="2">
    <location>
        <begin position="423"/>
        <end position="443"/>
    </location>
</feature>
<feature type="transmembrane region" description="Helical" evidence="2">
    <location>
        <begin position="500"/>
        <end position="520"/>
    </location>
</feature>
<feature type="transmembrane region" description="Helical" evidence="2">
    <location>
        <begin position="525"/>
        <end position="544"/>
    </location>
</feature>
<feature type="intramembrane region" description="Helical" evidence="2">
    <location>
        <begin position="572"/>
        <end position="586"/>
    </location>
</feature>
<feature type="intramembrane region" description="Helical" evidence="2">
    <location>
        <begin position="590"/>
        <end position="601"/>
    </location>
</feature>
<feature type="intramembrane region" description="Note=Loop between two helices" evidence="2">
    <location>
        <begin position="602"/>
        <end position="605"/>
    </location>
</feature>
<feature type="transmembrane region" description="Helical" evidence="2">
    <location>
        <begin position="606"/>
        <end position="624"/>
    </location>
</feature>
<feature type="topological domain" description="Cytoplasmic" evidence="2">
    <location>
        <begin position="625"/>
        <end position="818"/>
    </location>
</feature>
<feature type="domain" description="CBS 1" evidence="6">
    <location>
        <begin position="658"/>
        <end position="722"/>
    </location>
</feature>
<feature type="domain" description="CBS 2" evidence="6">
    <location>
        <begin position="755"/>
        <end position="812"/>
    </location>
</feature>
<feature type="short sequence motif" description="Di-leucine internalization motif; mediates targeting to late endosome and lysosome membranes" evidence="4">
    <location>
        <begin position="28"/>
        <end position="29"/>
    </location>
</feature>
<feature type="short sequence motif" description="Di-leucine internalization motif; mediates targeting to late endosome and lysosome membranes" evidence="4">
    <location>
        <begin position="46"/>
        <end position="47"/>
    </location>
</feature>
<feature type="short sequence motif" description="Di-leucine internalization motif; mediates targeting to late endosome and lysosome membranes" evidence="4">
    <location>
        <begin position="71"/>
        <end position="75"/>
    </location>
</feature>
<feature type="short sequence motif" description="Selectivity filter part_1" evidence="1">
    <location>
        <begin position="238"/>
        <end position="242"/>
    </location>
</feature>
<feature type="short sequence motif" description="Selectivity filter part_2" evidence="1">
    <location>
        <begin position="280"/>
        <end position="284"/>
    </location>
</feature>
<feature type="short sequence motif" description="Selectivity filter part_3" evidence="1">
    <location>
        <begin position="525"/>
        <end position="529"/>
    </location>
</feature>
<feature type="binding site" evidence="1">
    <location>
        <position position="239"/>
    </location>
    <ligand>
        <name>chloride</name>
        <dbReference type="ChEBI" id="CHEBI:17996"/>
    </ligand>
</feature>
<feature type="binding site" evidence="1">
    <location>
        <position position="527"/>
    </location>
    <ligand>
        <name>chloride</name>
        <dbReference type="ChEBI" id="CHEBI:17996"/>
    </ligand>
</feature>
<feature type="binding site" evidence="1">
    <location>
        <position position="630"/>
    </location>
    <ligand>
        <name>chloride</name>
        <dbReference type="ChEBI" id="CHEBI:17996"/>
    </ligand>
</feature>
<feature type="binding site" evidence="1">
    <location>
        <begin position="689"/>
        <end position="691"/>
    </location>
    <ligand>
        <name>ATP</name>
        <dbReference type="ChEBI" id="CHEBI:30616"/>
    </ligand>
</feature>
<feature type="binding site" evidence="1">
    <location>
        <begin position="796"/>
        <end position="799"/>
    </location>
    <ligand>
        <name>ATP</name>
        <dbReference type="ChEBI" id="CHEBI:30616"/>
    </ligand>
</feature>
<feature type="site" description="Mediates proton transfer from the outer aqueous phase to the interior of the protein; involved in linking H(+) and Cl(-) transport" evidence="1">
    <location>
        <position position="282"/>
    </location>
</feature>
<feature type="site" description="Mediates proton transfer from the protein to the inner aqueous phase" evidence="1">
    <location>
        <position position="339"/>
    </location>
</feature>
<feature type="glycosylation site" description="N-linked (GlcNAc...) asparagine" evidence="5">
    <location>
        <position position="177"/>
    </location>
</feature>
<feature type="glycosylation site" description="N-linked (GlcNAc...) asparagine" evidence="5">
    <location>
        <position position="451"/>
    </location>
</feature>
<feature type="glycosylation site" description="N-linked (GlcNAc...) asparagine" evidence="5">
    <location>
        <position position="479"/>
    </location>
</feature>
<feature type="splice variant" id="VSP_036900" description="In isoform 2." evidence="10">
    <location>
        <begin position="1"/>
        <end position="58"/>
    </location>
</feature>
<feature type="sequence conflict" description="In Ref. 1; BAA04471." evidence="11" ref="1">
    <original>I</original>
    <variation>V</variation>
    <location>
        <position position="774"/>
    </location>
</feature>
<keyword id="KW-0025">Alternative splicing</keyword>
<keyword id="KW-0050">Antiport</keyword>
<keyword id="KW-0067">ATP-binding</keyword>
<keyword id="KW-0129">CBS domain</keyword>
<keyword id="KW-1003">Cell membrane</keyword>
<keyword id="KW-0868">Chloride</keyword>
<keyword id="KW-0967">Endosome</keyword>
<keyword id="KW-0325">Glycoprotein</keyword>
<keyword id="KW-0406">Ion transport</keyword>
<keyword id="KW-0458">Lysosome</keyword>
<keyword id="KW-0472">Membrane</keyword>
<keyword id="KW-0547">Nucleotide-binding</keyword>
<keyword id="KW-1185">Reference proteome</keyword>
<keyword id="KW-0677">Repeat</keyword>
<keyword id="KW-0812">Transmembrane</keyword>
<keyword id="KW-1133">Transmembrane helix</keyword>
<keyword id="KW-0813">Transport</keyword>
<proteinExistence type="evidence at transcript level"/>
<evidence type="ECO:0000250" key="1"/>
<evidence type="ECO:0000250" key="2">
    <source>
        <dbReference type="UniProtKB" id="P35523"/>
    </source>
</evidence>
<evidence type="ECO:0000250" key="3">
    <source>
        <dbReference type="UniProtKB" id="P51790"/>
    </source>
</evidence>
<evidence type="ECO:0000250" key="4">
    <source>
        <dbReference type="UniProtKB" id="P51791"/>
    </source>
</evidence>
<evidence type="ECO:0000255" key="5"/>
<evidence type="ECO:0000255" key="6">
    <source>
        <dbReference type="PROSITE-ProRule" id="PRU00703"/>
    </source>
</evidence>
<evidence type="ECO:0000269" key="7">
    <source>
    </source>
</evidence>
<evidence type="ECO:0000269" key="8">
    <source>
    </source>
</evidence>
<evidence type="ECO:0000269" key="9">
    <source>
    </source>
</evidence>
<evidence type="ECO:0000303" key="10">
    <source>
    </source>
</evidence>
<evidence type="ECO:0000305" key="11"/>
<comment type="function">
    <molecule>Isoform 1</molecule>
    <text evidence="3 7">Strongly outwardly rectifying, electrogenic H(+)/Cl(-)exchanger which mediates the exchange of chloride ions against protons (PubMed:10915634). The CLC channel family contains both chloride channels and proton-coupled anion transporters that exchange chloride or another anion for protons (By similarity). The presence of conserved gating glutamate residues is typical for family members that function as antiporters (By similarity).</text>
</comment>
<comment type="function">
    <molecule>Isoform 2</molecule>
    <text evidence="7 9">Strongly outwardly rectifying, electrogenic H(+)/Cl(-)exchanger which mediates the exchange of chloride ions against protons (PubMed:10915634). May play an important role in neuronal cell function through regulation of membrane excitability by protein kinase C (PubMed:8155321). It could help neuronal cells to establish short-term memory (PubMed:8155321).</text>
</comment>
<comment type="subunit">
    <molecule>Isoform 1</molecule>
    <text evidence="4">Monomer and homodimer (By similarity). Forms heterodimers with CLCN4 (By similarity).</text>
</comment>
<comment type="subcellular location">
    <molecule>Isoform 1</molecule>
    <subcellularLocation>
        <location evidence="4">Lysosome membrane</location>
        <topology evidence="5">Multi-pass membrane protein</topology>
    </subcellularLocation>
    <subcellularLocation>
        <location evidence="4">Late endosome membrane</location>
        <topology evidence="5">Multi-pass membrane protein</topology>
    </subcellularLocation>
    <subcellularLocation>
        <location evidence="7">Cell membrane</location>
        <topology evidence="5">Multi-pass membrane protein</topology>
    </subcellularLocation>
    <subcellularLocation>
        <location evidence="3">Early endosome membrane</location>
        <topology evidence="5">Multi-pass membrane protein</topology>
    </subcellularLocation>
    <text evidence="7">In hepatocytes found in the canalicular membrane.</text>
</comment>
<comment type="subcellular location">
    <molecule>Isoform 2</molecule>
    <subcellularLocation>
        <location evidence="8">Early endosome membrane</location>
        <topology evidence="5">Multi-pass membrane protein</topology>
    </subcellularLocation>
    <subcellularLocation>
        <location evidence="8">Late endosome membrane</location>
        <topology evidence="5">Multi-pass membrane protein</topology>
    </subcellularLocation>
    <subcellularLocation>
        <location evidence="7">Cell membrane</location>
        <topology evidence="5">Multi-pass membrane protein</topology>
    </subcellularLocation>
    <text evidence="7">In hepatocytes found in the canalicular membrane.</text>
</comment>
<comment type="alternative products">
    <event type="alternative splicing"/>
    <isoform>
        <id>P51792-1</id>
        <name>1</name>
        <name>long</name>
        <sequence type="displayed"/>
    </isoform>
    <isoform>
        <id>P51792-2</id>
        <name>2</name>
        <name>short</name>
        <sequence type="described" ref="VSP_036900"/>
    </isoform>
</comment>
<comment type="tissue specificity">
    <text evidence="7">Abundant in brain, especially in the olfactory bulb, hippocampus, and cerebellum. A moderate expression is seen in the lung, kidney and adrenal gland.</text>
</comment>
<comment type="PTM">
    <text evidence="3">N-glycosylated.</text>
</comment>
<comment type="similarity">
    <text evidence="11">Belongs to the chloride channel (TC 2.A.49) family. ClC-3/CLCN3 subfamily.</text>
</comment>
<reference key="1">
    <citation type="journal article" date="1994" name="Neuron">
        <title>Cloning and expression of a protein kinase C-regulated chloride channel abundantly expressed in rat brain neuronal cells.</title>
        <authorList>
            <person name="Kawasaki M."/>
            <person name="Uchida S."/>
            <person name="Monkawa T."/>
            <person name="Miyawaki A."/>
            <person name="Mikoshiba K."/>
            <person name="Marumo F."/>
            <person name="Sasaki S."/>
        </authorList>
    </citation>
    <scope>NUCLEOTIDE SEQUENCE [MRNA] (ISOFORM 2)</scope>
    <scope>FUNCTION (ISOFORM 2)</scope>
    <source>
        <tissue>Kidney</tissue>
    </source>
</reference>
<reference key="2">
    <citation type="journal article" date="2000" name="Am. J. Physiol.">
        <title>Expression and canalicular localization of two isoforms of the ClC-3 chloride channel from rat hepatocytes.</title>
        <authorList>
            <person name="Shimada K."/>
            <person name="Li X."/>
            <person name="Xu G."/>
            <person name="Nowak D.E."/>
            <person name="Showalter L.A."/>
            <person name="Weinman S.A."/>
        </authorList>
    </citation>
    <scope>NUCLEOTIDE SEQUENCE [MRNA] (ISOFORM 1)</scope>
    <scope>ALTERNATIVE SPLICING (ISOFORM 2)</scope>
    <scope>FUNCTION (ISOFORMS 1 AND 2)</scope>
    <scope>SUBCELLULAR LOCATION (ISOFORMS 1 AND 2)</scope>
    <scope>TISSUE SPECIFICITY</scope>
    <source>
        <strain>Sprague-Dawley</strain>
    </source>
</reference>
<reference key="3">
    <citation type="journal article" date="2006" name="J. Cell. Physiol.">
        <title>Intracellular localization of ClC chloride channels and their ability to form hetero-oligomers.</title>
        <authorList>
            <person name="Suzuki T."/>
            <person name="Rai T."/>
            <person name="Hayama A."/>
            <person name="Sohara E."/>
            <person name="Suda S."/>
            <person name="Itoh T."/>
            <person name="Sasaki S."/>
            <person name="Uchida S."/>
        </authorList>
    </citation>
    <scope>SUBCELLULAR LOCATION (ISOFORM 2)</scope>
</reference>
<dbReference type="EMBL" id="D17521">
    <property type="protein sequence ID" value="BAA04471.1"/>
    <property type="molecule type" value="mRNA"/>
</dbReference>
<dbReference type="EMBL" id="AF142778">
    <property type="protein sequence ID" value="AAD29440.1"/>
    <property type="molecule type" value="mRNA"/>
</dbReference>
<dbReference type="RefSeq" id="NP_445815.2">
    <molecule id="P51792-1"/>
    <property type="nucleotide sequence ID" value="NM_053363.3"/>
</dbReference>
<dbReference type="RefSeq" id="XP_063131859.1">
    <molecule id="P51792-2"/>
    <property type="nucleotide sequence ID" value="XM_063275789.1"/>
</dbReference>
<dbReference type="SMR" id="P51792"/>
<dbReference type="FunCoup" id="P51792">
    <property type="interactions" value="3359"/>
</dbReference>
<dbReference type="STRING" id="10116.ENSRNOP00000072280"/>
<dbReference type="TCDB" id="2.A.49.2.3">
    <property type="family name" value="the chloride carrier/channel (clc) family"/>
</dbReference>
<dbReference type="GlyCosmos" id="P51792">
    <property type="glycosylation" value="3 sites, No reported glycans"/>
</dbReference>
<dbReference type="GlyGen" id="P51792">
    <property type="glycosylation" value="3 sites"/>
</dbReference>
<dbReference type="iPTMnet" id="P51792"/>
<dbReference type="PhosphoSitePlus" id="P51792"/>
<dbReference type="PaxDb" id="10116-ENSRNOP00000045523"/>
<dbReference type="ABCD" id="P51792">
    <property type="antibodies" value="1 sequenced antibody"/>
</dbReference>
<dbReference type="GeneID" id="84360"/>
<dbReference type="KEGG" id="rno:84360"/>
<dbReference type="UCSC" id="RGD:621219">
    <molecule id="P51792-1"/>
    <property type="organism name" value="rat"/>
</dbReference>
<dbReference type="AGR" id="RGD:621219"/>
<dbReference type="CTD" id="1182"/>
<dbReference type="RGD" id="621219">
    <property type="gene designation" value="Clcn3"/>
</dbReference>
<dbReference type="VEuPathDB" id="HostDB:ENSRNOG00000010682"/>
<dbReference type="eggNOG" id="KOG0475">
    <property type="taxonomic scope" value="Eukaryota"/>
</dbReference>
<dbReference type="HOGENOM" id="CLU_003181_2_1_1"/>
<dbReference type="InParanoid" id="P51792"/>
<dbReference type="PRO" id="PR:P51792"/>
<dbReference type="Proteomes" id="UP000002494">
    <property type="component" value="Chromosome 16"/>
</dbReference>
<dbReference type="Bgee" id="ENSRNOG00000010682">
    <property type="expression patterns" value="Expressed in Ammon's horn and 19 other cell types or tissues"/>
</dbReference>
<dbReference type="ExpressionAtlas" id="P51792">
    <property type="expression patterns" value="baseline and differential"/>
</dbReference>
<dbReference type="GO" id="GO:0016324">
    <property type="term" value="C:apical plasma membrane"/>
    <property type="evidence" value="ECO:0000314"/>
    <property type="project" value="RGD"/>
</dbReference>
<dbReference type="GO" id="GO:0043679">
    <property type="term" value="C:axon terminus"/>
    <property type="evidence" value="ECO:0000266"/>
    <property type="project" value="RGD"/>
</dbReference>
<dbReference type="GO" id="GO:0031410">
    <property type="term" value="C:cytoplasmic vesicle"/>
    <property type="evidence" value="ECO:0000266"/>
    <property type="project" value="RGD"/>
</dbReference>
<dbReference type="GO" id="GO:0005769">
    <property type="term" value="C:early endosome"/>
    <property type="evidence" value="ECO:0000250"/>
    <property type="project" value="UniProtKB"/>
</dbReference>
<dbReference type="GO" id="GO:0031901">
    <property type="term" value="C:early endosome membrane"/>
    <property type="evidence" value="ECO:0007669"/>
    <property type="project" value="UniProtKB-SubCell"/>
</dbReference>
<dbReference type="GO" id="GO:0005768">
    <property type="term" value="C:endosome"/>
    <property type="evidence" value="ECO:0000266"/>
    <property type="project" value="RGD"/>
</dbReference>
<dbReference type="GO" id="GO:0010008">
    <property type="term" value="C:endosome membrane"/>
    <property type="evidence" value="ECO:0000250"/>
    <property type="project" value="UniProtKB"/>
</dbReference>
<dbReference type="GO" id="GO:0009897">
    <property type="term" value="C:external side of plasma membrane"/>
    <property type="evidence" value="ECO:0000266"/>
    <property type="project" value="RGD"/>
</dbReference>
<dbReference type="GO" id="GO:0098982">
    <property type="term" value="C:GABA-ergic synapse"/>
    <property type="evidence" value="ECO:0000266"/>
    <property type="project" value="RGD"/>
</dbReference>
<dbReference type="GO" id="GO:0098978">
    <property type="term" value="C:glutamatergic synapse"/>
    <property type="evidence" value="ECO:0000314"/>
    <property type="project" value="SynGO"/>
</dbReference>
<dbReference type="GO" id="GO:0005794">
    <property type="term" value="C:Golgi apparatus"/>
    <property type="evidence" value="ECO:0000250"/>
    <property type="project" value="UniProtKB"/>
</dbReference>
<dbReference type="GO" id="GO:0060077">
    <property type="term" value="C:inhibitory synapse"/>
    <property type="evidence" value="ECO:0000314"/>
    <property type="project" value="MGI"/>
</dbReference>
<dbReference type="GO" id="GO:0005770">
    <property type="term" value="C:late endosome"/>
    <property type="evidence" value="ECO:0000250"/>
    <property type="project" value="UniProtKB"/>
</dbReference>
<dbReference type="GO" id="GO:0031902">
    <property type="term" value="C:late endosome membrane"/>
    <property type="evidence" value="ECO:0007669"/>
    <property type="project" value="UniProtKB-SubCell"/>
</dbReference>
<dbReference type="GO" id="GO:0005765">
    <property type="term" value="C:lysosomal membrane"/>
    <property type="evidence" value="ECO:0000250"/>
    <property type="project" value="UniProtKB"/>
</dbReference>
<dbReference type="GO" id="GO:0045335">
    <property type="term" value="C:phagocytic vesicle"/>
    <property type="evidence" value="ECO:0000266"/>
    <property type="project" value="RGD"/>
</dbReference>
<dbReference type="GO" id="GO:0005886">
    <property type="term" value="C:plasma membrane"/>
    <property type="evidence" value="ECO:0000314"/>
    <property type="project" value="UniProtKB"/>
</dbReference>
<dbReference type="GO" id="GO:0045211">
    <property type="term" value="C:postsynaptic membrane"/>
    <property type="evidence" value="ECO:0000314"/>
    <property type="project" value="SynGO"/>
</dbReference>
<dbReference type="GO" id="GO:0055037">
    <property type="term" value="C:recycling endosome"/>
    <property type="evidence" value="ECO:0000250"/>
    <property type="project" value="UniProtKB"/>
</dbReference>
<dbReference type="GO" id="GO:0030141">
    <property type="term" value="C:secretory granule"/>
    <property type="evidence" value="ECO:0000266"/>
    <property type="project" value="RGD"/>
</dbReference>
<dbReference type="GO" id="GO:0042581">
    <property type="term" value="C:specific granule"/>
    <property type="evidence" value="ECO:0000266"/>
    <property type="project" value="RGD"/>
</dbReference>
<dbReference type="GO" id="GO:0045202">
    <property type="term" value="C:synapse"/>
    <property type="evidence" value="ECO:0000314"/>
    <property type="project" value="GO_Central"/>
</dbReference>
<dbReference type="GO" id="GO:0008021">
    <property type="term" value="C:synaptic vesicle"/>
    <property type="evidence" value="ECO:0000314"/>
    <property type="project" value="MGI"/>
</dbReference>
<dbReference type="GO" id="GO:0030672">
    <property type="term" value="C:synaptic vesicle membrane"/>
    <property type="evidence" value="ECO:0000266"/>
    <property type="project" value="RGD"/>
</dbReference>
<dbReference type="GO" id="GO:0012506">
    <property type="term" value="C:vesicle membrane"/>
    <property type="evidence" value="ECO:0000250"/>
    <property type="project" value="UniProtKB"/>
</dbReference>
<dbReference type="GO" id="GO:0015297">
    <property type="term" value="F:antiporter activity"/>
    <property type="evidence" value="ECO:0000250"/>
    <property type="project" value="UniProtKB"/>
</dbReference>
<dbReference type="GO" id="GO:0005524">
    <property type="term" value="F:ATP binding"/>
    <property type="evidence" value="ECO:0007669"/>
    <property type="project" value="UniProtKB-KW"/>
</dbReference>
<dbReference type="GO" id="GO:0005254">
    <property type="term" value="F:chloride channel activity"/>
    <property type="evidence" value="ECO:0000314"/>
    <property type="project" value="RGD"/>
</dbReference>
<dbReference type="GO" id="GO:0062158">
    <property type="term" value="F:chloride:proton antiporter activity"/>
    <property type="evidence" value="ECO:0007669"/>
    <property type="project" value="InterPro"/>
</dbReference>
<dbReference type="GO" id="GO:0005216">
    <property type="term" value="F:monoatomic ion channel activity"/>
    <property type="evidence" value="ECO:0000314"/>
    <property type="project" value="RGD"/>
</dbReference>
<dbReference type="GO" id="GO:0030165">
    <property type="term" value="F:PDZ domain binding"/>
    <property type="evidence" value="ECO:0000250"/>
    <property type="project" value="UniProtKB"/>
</dbReference>
<dbReference type="GO" id="GO:0005247">
    <property type="term" value="F:voltage-gated chloride channel activity"/>
    <property type="evidence" value="ECO:0000314"/>
    <property type="project" value="UniProtKB"/>
</dbReference>
<dbReference type="GO" id="GO:0005244">
    <property type="term" value="F:voltage-gated monoatomic ion channel activity"/>
    <property type="evidence" value="ECO:0000314"/>
    <property type="project" value="RGD"/>
</dbReference>
<dbReference type="GO" id="GO:0072320">
    <property type="term" value="F:volume-sensitive chloride channel activity"/>
    <property type="evidence" value="ECO:0000266"/>
    <property type="project" value="RGD"/>
</dbReference>
<dbReference type="GO" id="GO:0008344">
    <property type="term" value="P:adult locomotory behavior"/>
    <property type="evidence" value="ECO:0000266"/>
    <property type="project" value="RGD"/>
</dbReference>
<dbReference type="GO" id="GO:1902476">
    <property type="term" value="P:chloride transmembrane transport"/>
    <property type="evidence" value="ECO:0000266"/>
    <property type="project" value="RGD"/>
</dbReference>
<dbReference type="GO" id="GO:0006821">
    <property type="term" value="P:chloride transport"/>
    <property type="evidence" value="ECO:0000314"/>
    <property type="project" value="RGD"/>
</dbReference>
<dbReference type="GO" id="GO:0006811">
    <property type="term" value="P:monoatomic ion transport"/>
    <property type="evidence" value="ECO:0000314"/>
    <property type="project" value="RGD"/>
</dbReference>
<dbReference type="GO" id="GO:0045794">
    <property type="term" value="P:negative regulation of cell volume"/>
    <property type="evidence" value="ECO:0000266"/>
    <property type="project" value="RGD"/>
</dbReference>
<dbReference type="GO" id="GO:0070050">
    <property type="term" value="P:neuron cellular homeostasis"/>
    <property type="evidence" value="ECO:0000266"/>
    <property type="project" value="RGD"/>
</dbReference>
<dbReference type="GO" id="GO:0006911">
    <property type="term" value="P:phagocytosis, engulfment"/>
    <property type="evidence" value="ECO:0000266"/>
    <property type="project" value="RGD"/>
</dbReference>
<dbReference type="GO" id="GO:0045494">
    <property type="term" value="P:photoreceptor cell maintenance"/>
    <property type="evidence" value="ECO:0000266"/>
    <property type="project" value="RGD"/>
</dbReference>
<dbReference type="GO" id="GO:1903428">
    <property type="term" value="P:positive regulation of reactive oxygen species biosynthetic process"/>
    <property type="evidence" value="ECO:0000266"/>
    <property type="project" value="RGD"/>
</dbReference>
<dbReference type="GO" id="GO:0051932">
    <property type="term" value="P:synaptic transmission, GABAergic"/>
    <property type="evidence" value="ECO:0000266"/>
    <property type="project" value="RGD"/>
</dbReference>
<dbReference type="GO" id="GO:0035249">
    <property type="term" value="P:synaptic transmission, glutamatergic"/>
    <property type="evidence" value="ECO:0000266"/>
    <property type="project" value="RGD"/>
</dbReference>
<dbReference type="GO" id="GO:0097401">
    <property type="term" value="P:synaptic vesicle lumen acidification"/>
    <property type="evidence" value="ECO:0000266"/>
    <property type="project" value="RGD"/>
</dbReference>
<dbReference type="CDD" id="cd04591">
    <property type="entry name" value="CBS_pair_voltage-gated_CLC_euk_bac"/>
    <property type="match status" value="1"/>
</dbReference>
<dbReference type="CDD" id="cd03684">
    <property type="entry name" value="ClC_3_like"/>
    <property type="match status" value="1"/>
</dbReference>
<dbReference type="FunFam" id="3.90.1280.20:FF:000001">
    <property type="entry name" value="Chloride channel protein"/>
    <property type="match status" value="1"/>
</dbReference>
<dbReference type="FunFam" id="3.90.1280.20:FF:000002">
    <property type="entry name" value="Chloride channel protein"/>
    <property type="match status" value="1"/>
</dbReference>
<dbReference type="Gene3D" id="3.90.1280.20">
    <property type="match status" value="2"/>
</dbReference>
<dbReference type="Gene3D" id="1.10.3080.10">
    <property type="entry name" value="Clc chloride channel"/>
    <property type="match status" value="1"/>
</dbReference>
<dbReference type="InterPro" id="IPR000644">
    <property type="entry name" value="CBS_dom"/>
</dbReference>
<dbReference type="InterPro" id="IPR046342">
    <property type="entry name" value="CBS_dom_sf"/>
</dbReference>
<dbReference type="InterPro" id="IPR014743">
    <property type="entry name" value="Cl-channel_core"/>
</dbReference>
<dbReference type="InterPro" id="IPR001807">
    <property type="entry name" value="ClC"/>
</dbReference>
<dbReference type="InterPro" id="IPR002245">
    <property type="entry name" value="ClC3"/>
</dbReference>
<dbReference type="PANTHER" id="PTHR45711">
    <property type="entry name" value="CHLORIDE CHANNEL PROTEIN"/>
    <property type="match status" value="1"/>
</dbReference>
<dbReference type="PANTHER" id="PTHR45711:SF8">
    <property type="entry name" value="H(+)_CL(-) EXCHANGE TRANSPORTER 3"/>
    <property type="match status" value="1"/>
</dbReference>
<dbReference type="Pfam" id="PF00571">
    <property type="entry name" value="CBS"/>
    <property type="match status" value="1"/>
</dbReference>
<dbReference type="Pfam" id="PF00654">
    <property type="entry name" value="Voltage_CLC"/>
    <property type="match status" value="1"/>
</dbReference>
<dbReference type="PRINTS" id="PR00762">
    <property type="entry name" value="CLCHANNEL"/>
</dbReference>
<dbReference type="PRINTS" id="PR01114">
    <property type="entry name" value="CLCHANNEL3"/>
</dbReference>
<dbReference type="SMART" id="SM00116">
    <property type="entry name" value="CBS"/>
    <property type="match status" value="2"/>
</dbReference>
<dbReference type="SUPFAM" id="SSF54631">
    <property type="entry name" value="CBS-domain pair"/>
    <property type="match status" value="1"/>
</dbReference>
<dbReference type="SUPFAM" id="SSF81340">
    <property type="entry name" value="Clc chloride channel"/>
    <property type="match status" value="1"/>
</dbReference>
<dbReference type="PROSITE" id="PS51371">
    <property type="entry name" value="CBS"/>
    <property type="match status" value="2"/>
</dbReference>
<gene>
    <name type="primary">Clcn3</name>
</gene>
<sequence length="818" mass="90855">MESEQLFHRGYYRNSYNSITSASSDEELLDGAGAIMDFQTSEDDNLLDGDTAAGTHYTMTNGGSINSSTHLLDLLDEPIPGVGTYDDFHTIDWVREKCKDRERHRRINSKKKESAWEMTKSLYDAWSGWLVVTLTGLASGALAGLIDIAADWMTDLKEGICLSALWYNHEQCCWGSNETTFEERDKCPQWKTWAELIIGQAEGPGSYIMNYIMYIFWALSFAFLAVSLVKVFAPYACGSGIPEIKTILSGFIIRGYLGKWTLMIKTITLVLAVASGLSLGKEGPLVHVACCCGNIFSYLFPKYSTNEAKKREVLSAASAAGVSVAFGAPIGGVLFSLEEVSYYFPLKTLWRSFFAALVAAFVLRSINPFGNSRLVLFYVEYHTPWYLFELFPFILLGVFGGLWGAFFIRANIAWCRRRKSTKFGKYPVLEVIIVAAITAVIAFPNPYTRLNTSELIKELFTDCGPLESSSLCDYRNDMNASKIVDDIPDRPAGVGVYSAIWQLCLALIFKIIMTVFTFGIKVPSGLFIPSMAIGAIAGRIVGIAVEQLAYYHHDWFIFKEWCEVGADCITPGLYAMVGAAACLGGVTRMTVSLVVIVFELTGGLEYIVPLMAAVMTSKWVGDAFGREGIYEAHIRLNGYPFLDAKEEFTHTTLAADVMRPRRSDPPLAVLTQDNMTVDDIENMINETSYNGFPVIMSKESQRLVGFALRRDLTIAIESARKKQEGVVGSSRVCFAQHTPSLPAESPRPLKLRSILDMSPFTVTDHTPMEIVVDIFRKLGLRQCLVTHNGRLLGIITKKDILRHMAQTANQDPASIMFN</sequence>
<protein>
    <recommendedName>
        <fullName>H(+)/Cl(-) exchange transporter 3</fullName>
    </recommendedName>
    <alternativeName>
        <fullName>Chloride channel protein 3</fullName>
        <shortName>ClC-3</shortName>
    </alternativeName>
    <alternativeName>
        <fullName>Chloride transporter ClC-3</fullName>
    </alternativeName>
</protein>